<organism>
    <name type="scientific">Xylella fastidiosa (strain 9a5c)</name>
    <dbReference type="NCBI Taxonomy" id="160492"/>
    <lineage>
        <taxon>Bacteria</taxon>
        <taxon>Pseudomonadati</taxon>
        <taxon>Pseudomonadota</taxon>
        <taxon>Gammaproteobacteria</taxon>
        <taxon>Lysobacterales</taxon>
        <taxon>Lysobacteraceae</taxon>
        <taxon>Xylella</taxon>
    </lineage>
</organism>
<name>DUSA_XYLFA</name>
<sequence length="340" mass="37864">MIPVINQEKQGISGDFRLSVAPMMNWTDRYCRVFHRVLAPSARLYTEMVHAKAVIYGDRERLLGFASVEQPVALQLGGSEPALLAKAARIAVDWGYSEINLNCGCPSDRVQAGSFGARLMREPALVADCVAAMAAVVSVPVTVKCRLGVNEDDDYGRFAKFVDWVSRASSSRMIVVHARNAWLQGLSPKENREIPPLRYDWVYRLKRERPELAVVLNGGITSVEAGLDHLLMVDGVMLGRAAYQDPYILHQFDCALSNAPLLPRALLLRALRPYVEVWLEQGLTLRHIVRHLFGLFHGQPGGRVFRQVLTQGGQRSDADWSLVEQALSIIEDQETYAAVV</sequence>
<feature type="chain" id="PRO_0000162081" description="tRNA-dihydrouridine(20/20a) synthase">
    <location>
        <begin position="1"/>
        <end position="340"/>
    </location>
</feature>
<feature type="active site" description="Proton donor" evidence="1">
    <location>
        <position position="105"/>
    </location>
</feature>
<feature type="binding site" evidence="1">
    <location>
        <begin position="22"/>
        <end position="24"/>
    </location>
    <ligand>
        <name>FMN</name>
        <dbReference type="ChEBI" id="CHEBI:58210"/>
    </ligand>
</feature>
<feature type="binding site" evidence="1">
    <location>
        <position position="75"/>
    </location>
    <ligand>
        <name>FMN</name>
        <dbReference type="ChEBI" id="CHEBI:58210"/>
    </ligand>
</feature>
<feature type="binding site" evidence="1">
    <location>
        <position position="144"/>
    </location>
    <ligand>
        <name>FMN</name>
        <dbReference type="ChEBI" id="CHEBI:58210"/>
    </ligand>
</feature>
<feature type="binding site" evidence="1">
    <location>
        <position position="177"/>
    </location>
    <ligand>
        <name>FMN</name>
        <dbReference type="ChEBI" id="CHEBI:58210"/>
    </ligand>
</feature>
<feature type="binding site" evidence="1">
    <location>
        <begin position="217"/>
        <end position="219"/>
    </location>
    <ligand>
        <name>FMN</name>
        <dbReference type="ChEBI" id="CHEBI:58210"/>
    </ligand>
</feature>
<feature type="binding site" evidence="1">
    <location>
        <begin position="239"/>
        <end position="240"/>
    </location>
    <ligand>
        <name>FMN</name>
        <dbReference type="ChEBI" id="CHEBI:58210"/>
    </ligand>
</feature>
<feature type="site" description="Interacts with tRNA" evidence="1">
    <location>
        <position position="102"/>
    </location>
</feature>
<feature type="site" description="Interacts with tRNA; defines subfamily-specific binding signature" evidence="1">
    <location>
        <position position="189"/>
    </location>
</feature>
<feature type="site" description="Interacts with tRNA" evidence="1">
    <location>
        <position position="192"/>
    </location>
</feature>
<feature type="site" description="Interacts with tRNA; defines subfamily-specific binding signature" evidence="1">
    <location>
        <position position="303"/>
    </location>
</feature>
<feature type="site" description="Interacts with tRNA; defines subfamily-specific binding signature" evidence="1">
    <location>
        <position position="306"/>
    </location>
</feature>
<reference key="1">
    <citation type="journal article" date="2000" name="Nature">
        <title>The genome sequence of the plant pathogen Xylella fastidiosa.</title>
        <authorList>
            <person name="Simpson A.J.G."/>
            <person name="Reinach F.C."/>
            <person name="Arruda P."/>
            <person name="Abreu F.A."/>
            <person name="Acencio M."/>
            <person name="Alvarenga R."/>
            <person name="Alves L.M.C."/>
            <person name="Araya J.E."/>
            <person name="Baia G.S."/>
            <person name="Baptista C.S."/>
            <person name="Barros M.H."/>
            <person name="Bonaccorsi E.D."/>
            <person name="Bordin S."/>
            <person name="Bove J.M."/>
            <person name="Briones M.R.S."/>
            <person name="Bueno M.R.P."/>
            <person name="Camargo A.A."/>
            <person name="Camargo L.E.A."/>
            <person name="Carraro D.M."/>
            <person name="Carrer H."/>
            <person name="Colauto N.B."/>
            <person name="Colombo C."/>
            <person name="Costa F.F."/>
            <person name="Costa M.C.R."/>
            <person name="Costa-Neto C.M."/>
            <person name="Coutinho L.L."/>
            <person name="Cristofani M."/>
            <person name="Dias-Neto E."/>
            <person name="Docena C."/>
            <person name="El-Dorry H."/>
            <person name="Facincani A.P."/>
            <person name="Ferreira A.J.S."/>
            <person name="Ferreira V.C.A."/>
            <person name="Ferro J.A."/>
            <person name="Fraga J.S."/>
            <person name="Franca S.C."/>
            <person name="Franco M.C."/>
            <person name="Frohme M."/>
            <person name="Furlan L.R."/>
            <person name="Garnier M."/>
            <person name="Goldman G.H."/>
            <person name="Goldman M.H.S."/>
            <person name="Gomes S.L."/>
            <person name="Gruber A."/>
            <person name="Ho P.L."/>
            <person name="Hoheisel J.D."/>
            <person name="Junqueira M.L."/>
            <person name="Kemper E.L."/>
            <person name="Kitajima J.P."/>
            <person name="Krieger J.E."/>
            <person name="Kuramae E.E."/>
            <person name="Laigret F."/>
            <person name="Lambais M.R."/>
            <person name="Leite L.C.C."/>
            <person name="Lemos E.G.M."/>
            <person name="Lemos M.V.F."/>
            <person name="Lopes S.A."/>
            <person name="Lopes C.R."/>
            <person name="Machado J.A."/>
            <person name="Machado M.A."/>
            <person name="Madeira A.M.B.N."/>
            <person name="Madeira H.M.F."/>
            <person name="Marino C.L."/>
            <person name="Marques M.V."/>
            <person name="Martins E.A.L."/>
            <person name="Martins E.M.F."/>
            <person name="Matsukuma A.Y."/>
            <person name="Menck C.F.M."/>
            <person name="Miracca E.C."/>
            <person name="Miyaki C.Y."/>
            <person name="Monteiro-Vitorello C.B."/>
            <person name="Moon D.H."/>
            <person name="Nagai M.A."/>
            <person name="Nascimento A.L.T.O."/>
            <person name="Netto L.E.S."/>
            <person name="Nhani A. Jr."/>
            <person name="Nobrega F.G."/>
            <person name="Nunes L.R."/>
            <person name="Oliveira M.A."/>
            <person name="de Oliveira M.C."/>
            <person name="de Oliveira R.C."/>
            <person name="Palmieri D.A."/>
            <person name="Paris A."/>
            <person name="Peixoto B.R."/>
            <person name="Pereira G.A.G."/>
            <person name="Pereira H.A. Jr."/>
            <person name="Pesquero J.B."/>
            <person name="Quaggio R.B."/>
            <person name="Roberto P.G."/>
            <person name="Rodrigues V."/>
            <person name="de Rosa A.J.M."/>
            <person name="de Rosa V.E. Jr."/>
            <person name="de Sa R.G."/>
            <person name="Santelli R.V."/>
            <person name="Sawasaki H.E."/>
            <person name="da Silva A.C.R."/>
            <person name="da Silva A.M."/>
            <person name="da Silva F.R."/>
            <person name="Silva W.A. Jr."/>
            <person name="da Silveira J.F."/>
            <person name="Silvestri M.L.Z."/>
            <person name="Siqueira W.J."/>
            <person name="de Souza A.A."/>
            <person name="de Souza A.P."/>
            <person name="Terenzi M.F."/>
            <person name="Truffi D."/>
            <person name="Tsai S.M."/>
            <person name="Tsuhako M.H."/>
            <person name="Vallada H."/>
            <person name="Van Sluys M.A."/>
            <person name="Verjovski-Almeida S."/>
            <person name="Vettore A.L."/>
            <person name="Zago M.A."/>
            <person name="Zatz M."/>
            <person name="Meidanis J."/>
            <person name="Setubal J.C."/>
        </authorList>
    </citation>
    <scope>NUCLEOTIDE SEQUENCE [LARGE SCALE GENOMIC DNA]</scope>
    <source>
        <strain>9a5c</strain>
    </source>
</reference>
<gene>
    <name evidence="1" type="primary">dusA</name>
    <name type="ordered locus">XF_0387</name>
</gene>
<protein>
    <recommendedName>
        <fullName evidence="1">tRNA-dihydrouridine(20/20a) synthase</fullName>
        <ecNumber evidence="1">1.3.1.-</ecNumber>
        <ecNumber evidence="1">1.3.1.91</ecNumber>
    </recommendedName>
    <alternativeName>
        <fullName evidence="1">U20-specific dihydrouridine synthase</fullName>
        <shortName evidence="1">U20-specific Dus</shortName>
    </alternativeName>
    <alternativeName>
        <fullName evidence="1">tRNA-dihydrouridine synthase A</fullName>
    </alternativeName>
</protein>
<accession>Q9PGB5</accession>
<comment type="function">
    <text evidence="1">Catalyzes the synthesis of 5,6-dihydrouridine (D), a modified base found in the D-loop of most tRNAs, via the reduction of the C5-C6 double bond in target uridines. Specifically modifies U20 and U20a in tRNAs.</text>
</comment>
<comment type="catalytic activity">
    <reaction evidence="1">
        <text>5,6-dihydrouridine(20) in tRNA + NADP(+) = uridine(20) in tRNA + NADPH + H(+)</text>
        <dbReference type="Rhea" id="RHEA:53336"/>
        <dbReference type="Rhea" id="RHEA-COMP:13533"/>
        <dbReference type="Rhea" id="RHEA-COMP:13534"/>
        <dbReference type="ChEBI" id="CHEBI:15378"/>
        <dbReference type="ChEBI" id="CHEBI:57783"/>
        <dbReference type="ChEBI" id="CHEBI:58349"/>
        <dbReference type="ChEBI" id="CHEBI:65315"/>
        <dbReference type="ChEBI" id="CHEBI:74443"/>
        <dbReference type="EC" id="1.3.1.91"/>
    </reaction>
</comment>
<comment type="catalytic activity">
    <reaction evidence="1">
        <text>5,6-dihydrouridine(20) in tRNA + NAD(+) = uridine(20) in tRNA + NADH + H(+)</text>
        <dbReference type="Rhea" id="RHEA:53340"/>
        <dbReference type="Rhea" id="RHEA-COMP:13533"/>
        <dbReference type="Rhea" id="RHEA-COMP:13534"/>
        <dbReference type="ChEBI" id="CHEBI:15378"/>
        <dbReference type="ChEBI" id="CHEBI:57540"/>
        <dbReference type="ChEBI" id="CHEBI:57945"/>
        <dbReference type="ChEBI" id="CHEBI:65315"/>
        <dbReference type="ChEBI" id="CHEBI:74443"/>
        <dbReference type="EC" id="1.3.1.91"/>
    </reaction>
</comment>
<comment type="catalytic activity">
    <reaction evidence="1">
        <text>5,6-dihydrouridine(20a) in tRNA + NADP(+) = uridine(20a) in tRNA + NADPH + H(+)</text>
        <dbReference type="Rhea" id="RHEA:53344"/>
        <dbReference type="Rhea" id="RHEA-COMP:13535"/>
        <dbReference type="Rhea" id="RHEA-COMP:13536"/>
        <dbReference type="ChEBI" id="CHEBI:15378"/>
        <dbReference type="ChEBI" id="CHEBI:57783"/>
        <dbReference type="ChEBI" id="CHEBI:58349"/>
        <dbReference type="ChEBI" id="CHEBI:65315"/>
        <dbReference type="ChEBI" id="CHEBI:74443"/>
    </reaction>
</comment>
<comment type="catalytic activity">
    <reaction evidence="1">
        <text>5,6-dihydrouridine(20a) in tRNA + NAD(+) = uridine(20a) in tRNA + NADH + H(+)</text>
        <dbReference type="Rhea" id="RHEA:53348"/>
        <dbReference type="Rhea" id="RHEA-COMP:13535"/>
        <dbReference type="Rhea" id="RHEA-COMP:13536"/>
        <dbReference type="ChEBI" id="CHEBI:15378"/>
        <dbReference type="ChEBI" id="CHEBI:57540"/>
        <dbReference type="ChEBI" id="CHEBI:57945"/>
        <dbReference type="ChEBI" id="CHEBI:65315"/>
        <dbReference type="ChEBI" id="CHEBI:74443"/>
    </reaction>
</comment>
<comment type="cofactor">
    <cofactor evidence="1">
        <name>FMN</name>
        <dbReference type="ChEBI" id="CHEBI:58210"/>
    </cofactor>
</comment>
<comment type="similarity">
    <text evidence="1">Belongs to the Dus family. DusA subfamily.</text>
</comment>
<keyword id="KW-0285">Flavoprotein</keyword>
<keyword id="KW-0288">FMN</keyword>
<keyword id="KW-0521">NADP</keyword>
<keyword id="KW-0560">Oxidoreductase</keyword>
<keyword id="KW-0694">RNA-binding</keyword>
<keyword id="KW-0819">tRNA processing</keyword>
<keyword id="KW-0820">tRNA-binding</keyword>
<dbReference type="EC" id="1.3.1.-" evidence="1"/>
<dbReference type="EC" id="1.3.1.91" evidence="1"/>
<dbReference type="EMBL" id="AE003849">
    <property type="protein sequence ID" value="AAF83197.1"/>
    <property type="molecule type" value="Genomic_DNA"/>
</dbReference>
<dbReference type="PIR" id="H82812">
    <property type="entry name" value="H82812"/>
</dbReference>
<dbReference type="RefSeq" id="WP_010892918.1">
    <property type="nucleotide sequence ID" value="NC_002488.3"/>
</dbReference>
<dbReference type="SMR" id="Q9PGB5"/>
<dbReference type="STRING" id="160492.XF_0387"/>
<dbReference type="KEGG" id="xfa:XF_0387"/>
<dbReference type="eggNOG" id="COG0042">
    <property type="taxonomic scope" value="Bacteria"/>
</dbReference>
<dbReference type="HOGENOM" id="CLU_013299_2_1_6"/>
<dbReference type="Proteomes" id="UP000000812">
    <property type="component" value="Chromosome"/>
</dbReference>
<dbReference type="GO" id="GO:0050660">
    <property type="term" value="F:flavin adenine dinucleotide binding"/>
    <property type="evidence" value="ECO:0007669"/>
    <property type="project" value="InterPro"/>
</dbReference>
<dbReference type="GO" id="GO:0010181">
    <property type="term" value="F:FMN binding"/>
    <property type="evidence" value="ECO:0007669"/>
    <property type="project" value="UniProtKB-UniRule"/>
</dbReference>
<dbReference type="GO" id="GO:0000049">
    <property type="term" value="F:tRNA binding"/>
    <property type="evidence" value="ECO:0007669"/>
    <property type="project" value="UniProtKB-UniRule"/>
</dbReference>
<dbReference type="GO" id="GO:0102264">
    <property type="term" value="F:tRNA-dihydrouridine20 synthase activity"/>
    <property type="evidence" value="ECO:0007669"/>
    <property type="project" value="UniProtKB-EC"/>
</dbReference>
<dbReference type="GO" id="GO:0102266">
    <property type="term" value="F:tRNA-dihydrouridine20a synthase activity"/>
    <property type="evidence" value="ECO:0007669"/>
    <property type="project" value="RHEA"/>
</dbReference>
<dbReference type="CDD" id="cd02801">
    <property type="entry name" value="DUS_like_FMN"/>
    <property type="match status" value="1"/>
</dbReference>
<dbReference type="Gene3D" id="1.20.120.1460">
    <property type="match status" value="1"/>
</dbReference>
<dbReference type="Gene3D" id="3.20.20.70">
    <property type="entry name" value="Aldolase class I"/>
    <property type="match status" value="1"/>
</dbReference>
<dbReference type="HAMAP" id="MF_02041">
    <property type="entry name" value="DusA_subfam"/>
    <property type="match status" value="1"/>
</dbReference>
<dbReference type="InterPro" id="IPR013785">
    <property type="entry name" value="Aldolase_TIM"/>
</dbReference>
<dbReference type="InterPro" id="IPR035587">
    <property type="entry name" value="DUS-like_FMN-bd"/>
</dbReference>
<dbReference type="InterPro" id="IPR001269">
    <property type="entry name" value="DUS_fam"/>
</dbReference>
<dbReference type="InterPro" id="IPR004653">
    <property type="entry name" value="DusA"/>
</dbReference>
<dbReference type="InterPro" id="IPR018517">
    <property type="entry name" value="tRNA_hU_synthase_CS"/>
</dbReference>
<dbReference type="NCBIfam" id="NF008774">
    <property type="entry name" value="PRK11815.1"/>
    <property type="match status" value="1"/>
</dbReference>
<dbReference type="PANTHER" id="PTHR42907">
    <property type="entry name" value="FMN-LINKED OXIDOREDUCTASES SUPERFAMILY PROTEIN"/>
    <property type="match status" value="1"/>
</dbReference>
<dbReference type="PANTHER" id="PTHR42907:SF1">
    <property type="entry name" value="FMN-LINKED OXIDOREDUCTASES SUPERFAMILY PROTEIN"/>
    <property type="match status" value="1"/>
</dbReference>
<dbReference type="Pfam" id="PF01207">
    <property type="entry name" value="Dus"/>
    <property type="match status" value="1"/>
</dbReference>
<dbReference type="PIRSF" id="PIRSF006621">
    <property type="entry name" value="Dus"/>
    <property type="match status" value="1"/>
</dbReference>
<dbReference type="SUPFAM" id="SSF51395">
    <property type="entry name" value="FMN-linked oxidoreductases"/>
    <property type="match status" value="1"/>
</dbReference>
<dbReference type="PROSITE" id="PS01136">
    <property type="entry name" value="UPF0034"/>
    <property type="match status" value="1"/>
</dbReference>
<evidence type="ECO:0000255" key="1">
    <source>
        <dbReference type="HAMAP-Rule" id="MF_02041"/>
    </source>
</evidence>
<proteinExistence type="inferred from homology"/>